<proteinExistence type="inferred from homology"/>
<organism>
    <name type="scientific">Thalassiosira pseudonana</name>
    <name type="common">Marine diatom</name>
    <name type="synonym">Cyclotella nana</name>
    <dbReference type="NCBI Taxonomy" id="35128"/>
    <lineage>
        <taxon>Eukaryota</taxon>
        <taxon>Sar</taxon>
        <taxon>Stramenopiles</taxon>
        <taxon>Ochrophyta</taxon>
        <taxon>Bacillariophyta</taxon>
        <taxon>Coscinodiscophyceae</taxon>
        <taxon>Thalassiosirophycidae</taxon>
        <taxon>Thalassiosirales</taxon>
        <taxon>Thalassiosiraceae</taxon>
        <taxon>Thalassiosira</taxon>
    </lineage>
</organism>
<keyword id="KW-0150">Chloroplast</keyword>
<keyword id="KW-0934">Plastid</keyword>
<keyword id="KW-0687">Ribonucleoprotein</keyword>
<keyword id="KW-0689">Ribosomal protein</keyword>
<evidence type="ECO:0000305" key="1"/>
<reference key="1">
    <citation type="journal article" date="2007" name="Mol. Genet. Genomics">
        <title>Chloroplast genomes of the diatoms Phaeodactylum tricornutum and Thalassiosira pseudonana: comparison with other plastid genomes of the red lineage.</title>
        <authorList>
            <person name="Oudot-Le Secq M.-P."/>
            <person name="Grimwood J."/>
            <person name="Shapiro H."/>
            <person name="Armbrust E.V."/>
            <person name="Bowler C."/>
            <person name="Green B.R."/>
        </authorList>
    </citation>
    <scope>NUCLEOTIDE SEQUENCE [LARGE SCALE GENOMIC DNA]</scope>
    <source>
        <strain>CCMP1335 / NEPCC58 / CCAP 1085/12</strain>
    </source>
</reference>
<gene>
    <name type="primary">rps9</name>
</gene>
<protein>
    <recommendedName>
        <fullName evidence="1">Small ribosomal subunit protein uS9c</fullName>
    </recommendedName>
    <alternativeName>
        <fullName>30S ribosomal protein S9, chloroplastic</fullName>
    </alternativeName>
</protein>
<accession>A0T0Z6</accession>
<geneLocation type="chloroplast"/>
<sequence length="134" mass="15140">MNTVFQKDKIGIGKRKRAVARVFLVPGTGTITINKVSGEKYLQYNTNYLNAIKAPLEKLNLTNQFDIVAIVRGGGLTGQTDSIKLGVARLLCKMEHENRLVLKPFGFLSRDARIKERKKYGLRKARKASQYSKR</sequence>
<name>RR9_THAPS</name>
<feature type="chain" id="PRO_0000277080" description="Small ribosomal subunit protein uS9c">
    <location>
        <begin position="1"/>
        <end position="134"/>
    </location>
</feature>
<dbReference type="EMBL" id="EF067921">
    <property type="protein sequence ID" value="ABK20831.1"/>
    <property type="molecule type" value="Genomic_DNA"/>
</dbReference>
<dbReference type="RefSeq" id="YP_874608.1">
    <property type="nucleotide sequence ID" value="NC_008589.1"/>
</dbReference>
<dbReference type="SMR" id="A0T0Z6"/>
<dbReference type="STRING" id="35128.A0T0Z6"/>
<dbReference type="GeneID" id="4524808"/>
<dbReference type="InParanoid" id="A0T0Z6"/>
<dbReference type="GO" id="GO:0009507">
    <property type="term" value="C:chloroplast"/>
    <property type="evidence" value="ECO:0007669"/>
    <property type="project" value="UniProtKB-SubCell"/>
</dbReference>
<dbReference type="GO" id="GO:0015935">
    <property type="term" value="C:small ribosomal subunit"/>
    <property type="evidence" value="ECO:0000318"/>
    <property type="project" value="GO_Central"/>
</dbReference>
<dbReference type="GO" id="GO:0003723">
    <property type="term" value="F:RNA binding"/>
    <property type="evidence" value="ECO:0000318"/>
    <property type="project" value="GO_Central"/>
</dbReference>
<dbReference type="GO" id="GO:0003735">
    <property type="term" value="F:structural constituent of ribosome"/>
    <property type="evidence" value="ECO:0000318"/>
    <property type="project" value="GO_Central"/>
</dbReference>
<dbReference type="GO" id="GO:0006412">
    <property type="term" value="P:translation"/>
    <property type="evidence" value="ECO:0007669"/>
    <property type="project" value="UniProtKB-UniRule"/>
</dbReference>
<dbReference type="FunFam" id="3.30.230.10:FF:000001">
    <property type="entry name" value="30S ribosomal protein S9"/>
    <property type="match status" value="1"/>
</dbReference>
<dbReference type="Gene3D" id="3.30.230.10">
    <property type="match status" value="1"/>
</dbReference>
<dbReference type="HAMAP" id="MF_00532_B">
    <property type="entry name" value="Ribosomal_uS9_B"/>
    <property type="match status" value="1"/>
</dbReference>
<dbReference type="InterPro" id="IPR020568">
    <property type="entry name" value="Ribosomal_Su5_D2-typ_SF"/>
</dbReference>
<dbReference type="InterPro" id="IPR000754">
    <property type="entry name" value="Ribosomal_uS9"/>
</dbReference>
<dbReference type="InterPro" id="IPR023035">
    <property type="entry name" value="Ribosomal_uS9_bac/plastid"/>
</dbReference>
<dbReference type="InterPro" id="IPR020574">
    <property type="entry name" value="Ribosomal_uS9_CS"/>
</dbReference>
<dbReference type="InterPro" id="IPR014721">
    <property type="entry name" value="Ribsml_uS5_D2-typ_fold_subgr"/>
</dbReference>
<dbReference type="NCBIfam" id="NF001099">
    <property type="entry name" value="PRK00132.1"/>
    <property type="match status" value="1"/>
</dbReference>
<dbReference type="PANTHER" id="PTHR21569">
    <property type="entry name" value="RIBOSOMAL PROTEIN S9"/>
    <property type="match status" value="1"/>
</dbReference>
<dbReference type="PANTHER" id="PTHR21569:SF1">
    <property type="entry name" value="SMALL RIBOSOMAL SUBUNIT PROTEIN US9M"/>
    <property type="match status" value="1"/>
</dbReference>
<dbReference type="Pfam" id="PF00380">
    <property type="entry name" value="Ribosomal_S9"/>
    <property type="match status" value="1"/>
</dbReference>
<dbReference type="SUPFAM" id="SSF54211">
    <property type="entry name" value="Ribosomal protein S5 domain 2-like"/>
    <property type="match status" value="1"/>
</dbReference>
<dbReference type="PROSITE" id="PS00360">
    <property type="entry name" value="RIBOSOMAL_S9"/>
    <property type="match status" value="1"/>
</dbReference>
<comment type="subcellular location">
    <subcellularLocation>
        <location>Plastid</location>
        <location>Chloroplast</location>
    </subcellularLocation>
</comment>
<comment type="similarity">
    <text evidence="1">Belongs to the universal ribosomal protein uS9 family.</text>
</comment>